<organism>
    <name type="scientific">Caulobacter sp. (strain K31)</name>
    <dbReference type="NCBI Taxonomy" id="366602"/>
    <lineage>
        <taxon>Bacteria</taxon>
        <taxon>Pseudomonadati</taxon>
        <taxon>Pseudomonadota</taxon>
        <taxon>Alphaproteobacteria</taxon>
        <taxon>Caulobacterales</taxon>
        <taxon>Caulobacteraceae</taxon>
        <taxon>Caulobacter</taxon>
    </lineage>
</organism>
<reference key="1">
    <citation type="submission" date="2008-01" db="EMBL/GenBank/DDBJ databases">
        <title>Complete sequence of chromosome of Caulobacter sp. K31.</title>
        <authorList>
            <consortium name="US DOE Joint Genome Institute"/>
            <person name="Copeland A."/>
            <person name="Lucas S."/>
            <person name="Lapidus A."/>
            <person name="Barry K."/>
            <person name="Glavina del Rio T."/>
            <person name="Dalin E."/>
            <person name="Tice H."/>
            <person name="Pitluck S."/>
            <person name="Bruce D."/>
            <person name="Goodwin L."/>
            <person name="Thompson L.S."/>
            <person name="Brettin T."/>
            <person name="Detter J.C."/>
            <person name="Han C."/>
            <person name="Schmutz J."/>
            <person name="Larimer F."/>
            <person name="Land M."/>
            <person name="Hauser L."/>
            <person name="Kyrpides N."/>
            <person name="Kim E."/>
            <person name="Stephens C."/>
            <person name="Richardson P."/>
        </authorList>
    </citation>
    <scope>NUCLEOTIDE SEQUENCE [LARGE SCALE GENOMIC DNA]</scope>
    <source>
        <strain>K31</strain>
    </source>
</reference>
<keyword id="KW-0963">Cytoplasm</keyword>
<keyword id="KW-0664">Pyridoxine biosynthesis</keyword>
<keyword id="KW-0808">Transferase</keyword>
<proteinExistence type="inferred from homology"/>
<accession>B0T3H6</accession>
<dbReference type="EC" id="2.6.99.2" evidence="1"/>
<dbReference type="EMBL" id="CP000927">
    <property type="protein sequence ID" value="ABZ70862.1"/>
    <property type="molecule type" value="Genomic_DNA"/>
</dbReference>
<dbReference type="SMR" id="B0T3H6"/>
<dbReference type="STRING" id="366602.Caul_1733"/>
<dbReference type="KEGG" id="cak:Caul_1733"/>
<dbReference type="eggNOG" id="COG0854">
    <property type="taxonomic scope" value="Bacteria"/>
</dbReference>
<dbReference type="HOGENOM" id="CLU_074563_0_0_5"/>
<dbReference type="UniPathway" id="UPA00244">
    <property type="reaction ID" value="UER00313"/>
</dbReference>
<dbReference type="GO" id="GO:0005829">
    <property type="term" value="C:cytosol"/>
    <property type="evidence" value="ECO:0007669"/>
    <property type="project" value="TreeGrafter"/>
</dbReference>
<dbReference type="GO" id="GO:0033856">
    <property type="term" value="F:pyridoxine 5'-phosphate synthase activity"/>
    <property type="evidence" value="ECO:0007669"/>
    <property type="project" value="UniProtKB-EC"/>
</dbReference>
<dbReference type="GO" id="GO:0008615">
    <property type="term" value="P:pyridoxine biosynthetic process"/>
    <property type="evidence" value="ECO:0007669"/>
    <property type="project" value="UniProtKB-UniRule"/>
</dbReference>
<dbReference type="CDD" id="cd00003">
    <property type="entry name" value="PNPsynthase"/>
    <property type="match status" value="1"/>
</dbReference>
<dbReference type="Gene3D" id="3.20.20.70">
    <property type="entry name" value="Aldolase class I"/>
    <property type="match status" value="1"/>
</dbReference>
<dbReference type="HAMAP" id="MF_00279">
    <property type="entry name" value="PdxJ"/>
    <property type="match status" value="1"/>
</dbReference>
<dbReference type="InterPro" id="IPR013785">
    <property type="entry name" value="Aldolase_TIM"/>
</dbReference>
<dbReference type="InterPro" id="IPR004569">
    <property type="entry name" value="PyrdxlP_synth_PdxJ"/>
</dbReference>
<dbReference type="InterPro" id="IPR036130">
    <property type="entry name" value="Pyridoxine-5'_phos_synth"/>
</dbReference>
<dbReference type="NCBIfam" id="TIGR00559">
    <property type="entry name" value="pdxJ"/>
    <property type="match status" value="1"/>
</dbReference>
<dbReference type="NCBIfam" id="NF003624">
    <property type="entry name" value="PRK05265.1-2"/>
    <property type="match status" value="1"/>
</dbReference>
<dbReference type="NCBIfam" id="NF003625">
    <property type="entry name" value="PRK05265.1-3"/>
    <property type="match status" value="1"/>
</dbReference>
<dbReference type="NCBIfam" id="NF003627">
    <property type="entry name" value="PRK05265.1-5"/>
    <property type="match status" value="1"/>
</dbReference>
<dbReference type="PANTHER" id="PTHR30456">
    <property type="entry name" value="PYRIDOXINE 5'-PHOSPHATE SYNTHASE"/>
    <property type="match status" value="1"/>
</dbReference>
<dbReference type="PANTHER" id="PTHR30456:SF0">
    <property type="entry name" value="PYRIDOXINE 5'-PHOSPHATE SYNTHASE"/>
    <property type="match status" value="1"/>
</dbReference>
<dbReference type="Pfam" id="PF03740">
    <property type="entry name" value="PdxJ"/>
    <property type="match status" value="1"/>
</dbReference>
<dbReference type="SUPFAM" id="SSF63892">
    <property type="entry name" value="Pyridoxine 5'-phosphate synthase"/>
    <property type="match status" value="1"/>
</dbReference>
<feature type="chain" id="PRO_1000078815" description="Pyridoxine 5'-phosphate synthase">
    <location>
        <begin position="1"/>
        <end position="251"/>
    </location>
</feature>
<feature type="active site" description="Proton acceptor" evidence="1">
    <location>
        <position position="43"/>
    </location>
</feature>
<feature type="active site" description="Proton acceptor" evidence="1">
    <location>
        <position position="73"/>
    </location>
</feature>
<feature type="active site" description="Proton donor" evidence="1">
    <location>
        <position position="197"/>
    </location>
</feature>
<feature type="binding site" evidence="1">
    <location>
        <position position="7"/>
    </location>
    <ligand>
        <name>3-amino-2-oxopropyl phosphate</name>
        <dbReference type="ChEBI" id="CHEBI:57279"/>
    </ligand>
</feature>
<feature type="binding site" evidence="1">
    <location>
        <begin position="9"/>
        <end position="10"/>
    </location>
    <ligand>
        <name>1-deoxy-D-xylulose 5-phosphate</name>
        <dbReference type="ChEBI" id="CHEBI:57792"/>
    </ligand>
</feature>
<feature type="binding site" evidence="1">
    <location>
        <position position="18"/>
    </location>
    <ligand>
        <name>3-amino-2-oxopropyl phosphate</name>
        <dbReference type="ChEBI" id="CHEBI:57279"/>
    </ligand>
</feature>
<feature type="binding site" evidence="1">
    <location>
        <position position="45"/>
    </location>
    <ligand>
        <name>1-deoxy-D-xylulose 5-phosphate</name>
        <dbReference type="ChEBI" id="CHEBI:57792"/>
    </ligand>
</feature>
<feature type="binding site" evidence="1">
    <location>
        <position position="50"/>
    </location>
    <ligand>
        <name>1-deoxy-D-xylulose 5-phosphate</name>
        <dbReference type="ChEBI" id="CHEBI:57792"/>
    </ligand>
</feature>
<feature type="binding site" evidence="1">
    <location>
        <position position="103"/>
    </location>
    <ligand>
        <name>1-deoxy-D-xylulose 5-phosphate</name>
        <dbReference type="ChEBI" id="CHEBI:57792"/>
    </ligand>
</feature>
<feature type="binding site" evidence="1">
    <location>
        <position position="198"/>
    </location>
    <ligand>
        <name>3-amino-2-oxopropyl phosphate</name>
        <dbReference type="ChEBI" id="CHEBI:57279"/>
    </ligand>
</feature>
<feature type="binding site" evidence="1">
    <location>
        <begin position="219"/>
        <end position="220"/>
    </location>
    <ligand>
        <name>3-amino-2-oxopropyl phosphate</name>
        <dbReference type="ChEBI" id="CHEBI:57279"/>
    </ligand>
</feature>
<feature type="site" description="Transition state stabilizer" evidence="1">
    <location>
        <position position="154"/>
    </location>
</feature>
<name>PDXJ_CAUSK</name>
<sequence length="251" mass="26554">MLRLGVNIDHVATIRNARGSSYPEPVRAAELALAAGADGITAHLREDRRHISDADIALLTDLCLKRGKPLNFEMAVTDEMVGIALQARPHAACLVPERREEVTTEGGLDVVKGFDKIAAATARLRTAGARVSLFIEADPAQIQASADAGAQVVELHTGAYCDAAREGHADRAAAILERLKTGAELAASLGLEVHAGHGIDYATVKPIAAIPQIAELNIGHFLIGEAIFVGLPQAMQRMRVLMDAARLEVAA</sequence>
<protein>
    <recommendedName>
        <fullName evidence="1">Pyridoxine 5'-phosphate synthase</fullName>
        <shortName evidence="1">PNP synthase</shortName>
        <ecNumber evidence="1">2.6.99.2</ecNumber>
    </recommendedName>
</protein>
<evidence type="ECO:0000255" key="1">
    <source>
        <dbReference type="HAMAP-Rule" id="MF_00279"/>
    </source>
</evidence>
<comment type="function">
    <text evidence="1">Catalyzes the complicated ring closure reaction between the two acyclic compounds 1-deoxy-D-xylulose-5-phosphate (DXP) and 3-amino-2-oxopropyl phosphate (1-amino-acetone-3-phosphate or AAP) to form pyridoxine 5'-phosphate (PNP) and inorganic phosphate.</text>
</comment>
<comment type="catalytic activity">
    <reaction evidence="1">
        <text>3-amino-2-oxopropyl phosphate + 1-deoxy-D-xylulose 5-phosphate = pyridoxine 5'-phosphate + phosphate + 2 H2O + H(+)</text>
        <dbReference type="Rhea" id="RHEA:15265"/>
        <dbReference type="ChEBI" id="CHEBI:15377"/>
        <dbReference type="ChEBI" id="CHEBI:15378"/>
        <dbReference type="ChEBI" id="CHEBI:43474"/>
        <dbReference type="ChEBI" id="CHEBI:57279"/>
        <dbReference type="ChEBI" id="CHEBI:57792"/>
        <dbReference type="ChEBI" id="CHEBI:58589"/>
        <dbReference type="EC" id="2.6.99.2"/>
    </reaction>
</comment>
<comment type="pathway">
    <text evidence="1">Cofactor biosynthesis; pyridoxine 5'-phosphate biosynthesis; pyridoxine 5'-phosphate from D-erythrose 4-phosphate: step 5/5.</text>
</comment>
<comment type="subunit">
    <text evidence="1">Homooctamer; tetramer of dimers.</text>
</comment>
<comment type="subcellular location">
    <subcellularLocation>
        <location evidence="1">Cytoplasm</location>
    </subcellularLocation>
</comment>
<comment type="similarity">
    <text evidence="1">Belongs to the PNP synthase family.</text>
</comment>
<gene>
    <name evidence="1" type="primary">pdxJ</name>
    <name type="ordered locus">Caul_1733</name>
</gene>